<sequence>MSDSQTLVVKLGTSVLTGGSRRLNRAHIVELVRQCAQLHAAGHRIVIVTSGAIAAGREHLGYPELPATIASKQLLAAVGQSRLIQLWEQLFSIYGIHVGQMLLTRADMEDRERFLNARDTLRALLDNNIVPVINENDAVATAEIKVGDNDNLSALAAILAGADKLLLLTDQKGLYTADPRSNPQAELIKDVYGIDDALRAIAGDSVSGLGTGGMSTKLQAADVACRAGIDTIIAAGSKPGVIGDVMEGISVGTLFHAQATPLENRKRWIFGAPPAGEITVDEGATAAILERGSSLLPKGIKSVTGNFSRGEVIRICNLEGRDIAHGVSRYNSDALRRIAGHHSQEIDAILGYEYGPVAVHRDDMITR</sequence>
<name>PROB_SHIBS</name>
<organism>
    <name type="scientific">Shigella boydii serotype 4 (strain Sb227)</name>
    <dbReference type="NCBI Taxonomy" id="300268"/>
    <lineage>
        <taxon>Bacteria</taxon>
        <taxon>Pseudomonadati</taxon>
        <taxon>Pseudomonadota</taxon>
        <taxon>Gammaproteobacteria</taxon>
        <taxon>Enterobacterales</taxon>
        <taxon>Enterobacteriaceae</taxon>
        <taxon>Shigella</taxon>
    </lineage>
</organism>
<protein>
    <recommendedName>
        <fullName evidence="1">Glutamate 5-kinase</fullName>
        <ecNumber evidence="1">2.7.2.11</ecNumber>
    </recommendedName>
    <alternativeName>
        <fullName evidence="1">Gamma-glutamyl kinase</fullName>
        <shortName evidence="1">GK</shortName>
    </alternativeName>
</protein>
<dbReference type="EC" id="2.7.2.11" evidence="1"/>
<dbReference type="EMBL" id="CP000036">
    <property type="protein sequence ID" value="ABB64964.1"/>
    <property type="molecule type" value="Genomic_DNA"/>
</dbReference>
<dbReference type="RefSeq" id="WP_001285288.1">
    <property type="nucleotide sequence ID" value="NC_007613.1"/>
</dbReference>
<dbReference type="SMR" id="Q325P4"/>
<dbReference type="GeneID" id="93777151"/>
<dbReference type="KEGG" id="sbo:SBO_0248"/>
<dbReference type="HOGENOM" id="CLU_025400_2_0_6"/>
<dbReference type="UniPathway" id="UPA00098">
    <property type="reaction ID" value="UER00359"/>
</dbReference>
<dbReference type="Proteomes" id="UP000007067">
    <property type="component" value="Chromosome"/>
</dbReference>
<dbReference type="GO" id="GO:0005829">
    <property type="term" value="C:cytosol"/>
    <property type="evidence" value="ECO:0007669"/>
    <property type="project" value="TreeGrafter"/>
</dbReference>
<dbReference type="GO" id="GO:0005524">
    <property type="term" value="F:ATP binding"/>
    <property type="evidence" value="ECO:0007669"/>
    <property type="project" value="UniProtKB-KW"/>
</dbReference>
<dbReference type="GO" id="GO:0004349">
    <property type="term" value="F:glutamate 5-kinase activity"/>
    <property type="evidence" value="ECO:0007669"/>
    <property type="project" value="UniProtKB-UniRule"/>
</dbReference>
<dbReference type="GO" id="GO:0003723">
    <property type="term" value="F:RNA binding"/>
    <property type="evidence" value="ECO:0007669"/>
    <property type="project" value="InterPro"/>
</dbReference>
<dbReference type="GO" id="GO:0055129">
    <property type="term" value="P:L-proline biosynthetic process"/>
    <property type="evidence" value="ECO:0007669"/>
    <property type="project" value="UniProtKB-UniRule"/>
</dbReference>
<dbReference type="CDD" id="cd04242">
    <property type="entry name" value="AAK_G5K_ProB"/>
    <property type="match status" value="1"/>
</dbReference>
<dbReference type="CDD" id="cd21157">
    <property type="entry name" value="PUA_G5K"/>
    <property type="match status" value="1"/>
</dbReference>
<dbReference type="FunFam" id="2.30.130.10:FF:000003">
    <property type="entry name" value="Glutamate 5-kinase"/>
    <property type="match status" value="1"/>
</dbReference>
<dbReference type="FunFam" id="3.40.1160.10:FF:000006">
    <property type="entry name" value="Glutamate 5-kinase"/>
    <property type="match status" value="1"/>
</dbReference>
<dbReference type="Gene3D" id="3.40.1160.10">
    <property type="entry name" value="Acetylglutamate kinase-like"/>
    <property type="match status" value="2"/>
</dbReference>
<dbReference type="Gene3D" id="2.30.130.10">
    <property type="entry name" value="PUA domain"/>
    <property type="match status" value="1"/>
</dbReference>
<dbReference type="HAMAP" id="MF_00456">
    <property type="entry name" value="ProB"/>
    <property type="match status" value="1"/>
</dbReference>
<dbReference type="InterPro" id="IPR036393">
    <property type="entry name" value="AceGlu_kinase-like_sf"/>
</dbReference>
<dbReference type="InterPro" id="IPR001048">
    <property type="entry name" value="Asp/Glu/Uridylate_kinase"/>
</dbReference>
<dbReference type="InterPro" id="IPR041739">
    <property type="entry name" value="G5K_ProB"/>
</dbReference>
<dbReference type="InterPro" id="IPR001057">
    <property type="entry name" value="Glu/AcGlu_kinase"/>
</dbReference>
<dbReference type="InterPro" id="IPR011529">
    <property type="entry name" value="Glu_5kinase"/>
</dbReference>
<dbReference type="InterPro" id="IPR005715">
    <property type="entry name" value="Glu_5kinase/COase_Synthase"/>
</dbReference>
<dbReference type="InterPro" id="IPR019797">
    <property type="entry name" value="Glutamate_5-kinase_CS"/>
</dbReference>
<dbReference type="InterPro" id="IPR002478">
    <property type="entry name" value="PUA"/>
</dbReference>
<dbReference type="InterPro" id="IPR015947">
    <property type="entry name" value="PUA-like_sf"/>
</dbReference>
<dbReference type="InterPro" id="IPR036974">
    <property type="entry name" value="PUA_sf"/>
</dbReference>
<dbReference type="NCBIfam" id="TIGR01027">
    <property type="entry name" value="proB"/>
    <property type="match status" value="1"/>
</dbReference>
<dbReference type="PANTHER" id="PTHR43654">
    <property type="entry name" value="GLUTAMATE 5-KINASE"/>
    <property type="match status" value="1"/>
</dbReference>
<dbReference type="PANTHER" id="PTHR43654:SF1">
    <property type="entry name" value="ISOPENTENYL PHOSPHATE KINASE"/>
    <property type="match status" value="1"/>
</dbReference>
<dbReference type="Pfam" id="PF00696">
    <property type="entry name" value="AA_kinase"/>
    <property type="match status" value="1"/>
</dbReference>
<dbReference type="Pfam" id="PF01472">
    <property type="entry name" value="PUA"/>
    <property type="match status" value="1"/>
</dbReference>
<dbReference type="PIRSF" id="PIRSF000729">
    <property type="entry name" value="GK"/>
    <property type="match status" value="1"/>
</dbReference>
<dbReference type="PRINTS" id="PR00474">
    <property type="entry name" value="GLU5KINASE"/>
</dbReference>
<dbReference type="SMART" id="SM00359">
    <property type="entry name" value="PUA"/>
    <property type="match status" value="1"/>
</dbReference>
<dbReference type="SUPFAM" id="SSF53633">
    <property type="entry name" value="Carbamate kinase-like"/>
    <property type="match status" value="1"/>
</dbReference>
<dbReference type="SUPFAM" id="SSF88697">
    <property type="entry name" value="PUA domain-like"/>
    <property type="match status" value="1"/>
</dbReference>
<dbReference type="PROSITE" id="PS00902">
    <property type="entry name" value="GLUTAMATE_5_KINASE"/>
    <property type="match status" value="1"/>
</dbReference>
<dbReference type="PROSITE" id="PS50890">
    <property type="entry name" value="PUA"/>
    <property type="match status" value="1"/>
</dbReference>
<evidence type="ECO:0000255" key="1">
    <source>
        <dbReference type="HAMAP-Rule" id="MF_00456"/>
    </source>
</evidence>
<gene>
    <name evidence="1" type="primary">proB</name>
    <name type="ordered locus">SBO_0248</name>
</gene>
<keyword id="KW-0028">Amino-acid biosynthesis</keyword>
<keyword id="KW-0067">ATP-binding</keyword>
<keyword id="KW-0963">Cytoplasm</keyword>
<keyword id="KW-0418">Kinase</keyword>
<keyword id="KW-0547">Nucleotide-binding</keyword>
<keyword id="KW-0641">Proline biosynthesis</keyword>
<keyword id="KW-0808">Transferase</keyword>
<comment type="function">
    <text evidence="1">Catalyzes the transfer of a phosphate group to glutamate to form L-glutamate 5-phosphate.</text>
</comment>
<comment type="catalytic activity">
    <reaction evidence="1">
        <text>L-glutamate + ATP = L-glutamyl 5-phosphate + ADP</text>
        <dbReference type="Rhea" id="RHEA:14877"/>
        <dbReference type="ChEBI" id="CHEBI:29985"/>
        <dbReference type="ChEBI" id="CHEBI:30616"/>
        <dbReference type="ChEBI" id="CHEBI:58274"/>
        <dbReference type="ChEBI" id="CHEBI:456216"/>
        <dbReference type="EC" id="2.7.2.11"/>
    </reaction>
</comment>
<comment type="pathway">
    <text evidence="1">Amino-acid biosynthesis; L-proline biosynthesis; L-glutamate 5-semialdehyde from L-glutamate: step 1/2.</text>
</comment>
<comment type="subcellular location">
    <subcellularLocation>
        <location evidence="1">Cytoplasm</location>
    </subcellularLocation>
</comment>
<comment type="similarity">
    <text evidence="1">Belongs to the glutamate 5-kinase family.</text>
</comment>
<feature type="chain" id="PRO_0000230065" description="Glutamate 5-kinase">
    <location>
        <begin position="1"/>
        <end position="367"/>
    </location>
</feature>
<feature type="domain" description="PUA" evidence="1">
    <location>
        <begin position="275"/>
        <end position="353"/>
    </location>
</feature>
<feature type="binding site" evidence="1">
    <location>
        <position position="10"/>
    </location>
    <ligand>
        <name>ATP</name>
        <dbReference type="ChEBI" id="CHEBI:30616"/>
    </ligand>
</feature>
<feature type="binding site" evidence="1">
    <location>
        <position position="50"/>
    </location>
    <ligand>
        <name>substrate</name>
    </ligand>
</feature>
<feature type="binding site" evidence="1">
    <location>
        <position position="137"/>
    </location>
    <ligand>
        <name>substrate</name>
    </ligand>
</feature>
<feature type="binding site" evidence="1">
    <location>
        <position position="149"/>
    </location>
    <ligand>
        <name>substrate</name>
    </ligand>
</feature>
<feature type="binding site" evidence="1">
    <location>
        <begin position="169"/>
        <end position="170"/>
    </location>
    <ligand>
        <name>ATP</name>
        <dbReference type="ChEBI" id="CHEBI:30616"/>
    </ligand>
</feature>
<feature type="binding site" evidence="1">
    <location>
        <begin position="211"/>
        <end position="217"/>
    </location>
    <ligand>
        <name>ATP</name>
        <dbReference type="ChEBI" id="CHEBI:30616"/>
    </ligand>
</feature>
<reference key="1">
    <citation type="journal article" date="2005" name="Nucleic Acids Res.">
        <title>Genome dynamics and diversity of Shigella species, the etiologic agents of bacillary dysentery.</title>
        <authorList>
            <person name="Yang F."/>
            <person name="Yang J."/>
            <person name="Zhang X."/>
            <person name="Chen L."/>
            <person name="Jiang Y."/>
            <person name="Yan Y."/>
            <person name="Tang X."/>
            <person name="Wang J."/>
            <person name="Xiong Z."/>
            <person name="Dong J."/>
            <person name="Xue Y."/>
            <person name="Zhu Y."/>
            <person name="Xu X."/>
            <person name="Sun L."/>
            <person name="Chen S."/>
            <person name="Nie H."/>
            <person name="Peng J."/>
            <person name="Xu J."/>
            <person name="Wang Y."/>
            <person name="Yuan Z."/>
            <person name="Wen Y."/>
            <person name="Yao Z."/>
            <person name="Shen Y."/>
            <person name="Qiang B."/>
            <person name="Hou Y."/>
            <person name="Yu J."/>
            <person name="Jin Q."/>
        </authorList>
    </citation>
    <scope>NUCLEOTIDE SEQUENCE [LARGE SCALE GENOMIC DNA]</scope>
    <source>
        <strain>Sb227</strain>
    </source>
</reference>
<proteinExistence type="inferred from homology"/>
<accession>Q325P4</accession>